<organism evidence="8">
    <name type="scientific">Drosophila melanogaster</name>
    <name type="common">Fruit fly</name>
    <dbReference type="NCBI Taxonomy" id="7227"/>
    <lineage>
        <taxon>Eukaryota</taxon>
        <taxon>Metazoa</taxon>
        <taxon>Ecdysozoa</taxon>
        <taxon>Arthropoda</taxon>
        <taxon>Hexapoda</taxon>
        <taxon>Insecta</taxon>
        <taxon>Pterygota</taxon>
        <taxon>Neoptera</taxon>
        <taxon>Endopterygota</taxon>
        <taxon>Diptera</taxon>
        <taxon>Brachycera</taxon>
        <taxon>Muscomorpha</taxon>
        <taxon>Ephydroidea</taxon>
        <taxon>Drosophilidae</taxon>
        <taxon>Drosophila</taxon>
        <taxon>Sophophora</taxon>
    </lineage>
</organism>
<proteinExistence type="evidence at protein level"/>
<feature type="signal peptide" evidence="1">
    <location>
        <begin position="1"/>
        <end position="24"/>
    </location>
</feature>
<feature type="chain" id="PRO_0000394229" description="Endoribonuclease Arlr" evidence="1">
    <location>
        <begin position="25"/>
        <end position="592"/>
    </location>
</feature>
<feature type="domain" description="EndoU" evidence="2">
    <location>
        <begin position="329"/>
        <end position="592"/>
    </location>
</feature>
<feature type="region of interest" description="Disordered" evidence="3">
    <location>
        <begin position="83"/>
        <end position="329"/>
    </location>
</feature>
<feature type="compositionally biased region" description="Polar residues" evidence="3">
    <location>
        <begin position="109"/>
        <end position="120"/>
    </location>
</feature>
<feature type="compositionally biased region" description="Low complexity" evidence="3">
    <location>
        <begin position="134"/>
        <end position="144"/>
    </location>
</feature>
<feature type="compositionally biased region" description="Low complexity" evidence="3">
    <location>
        <begin position="188"/>
        <end position="209"/>
    </location>
</feature>
<feature type="compositionally biased region" description="Pro residues" evidence="3">
    <location>
        <begin position="234"/>
        <end position="249"/>
    </location>
</feature>
<feature type="compositionally biased region" description="Pro residues" evidence="3">
    <location>
        <begin position="258"/>
        <end position="267"/>
    </location>
</feature>
<feature type="compositionally biased region" description="Low complexity" evidence="3">
    <location>
        <begin position="268"/>
        <end position="294"/>
    </location>
</feature>
<feature type="active site" evidence="2">
    <location>
        <position position="473"/>
    </location>
</feature>
<feature type="active site" evidence="2">
    <location>
        <position position="488"/>
    </location>
</feature>
<feature type="active site" evidence="2">
    <location>
        <position position="531"/>
    </location>
</feature>
<name>ENDUA_DROME</name>
<dbReference type="EC" id="3.1.-.-" evidence="2"/>
<dbReference type="EC" id="4.6.1.-" evidence="4"/>
<dbReference type="EMBL" id="AE014298">
    <property type="protein sequence ID" value="AAF47979.1"/>
    <property type="molecule type" value="Genomic_DNA"/>
</dbReference>
<dbReference type="EMBL" id="AE014298">
    <property type="protein sequence ID" value="AHN59572.1"/>
    <property type="molecule type" value="Genomic_DNA"/>
</dbReference>
<dbReference type="EMBL" id="BT031314">
    <property type="protein sequence ID" value="ABY21727.1"/>
    <property type="status" value="ALT_INIT"/>
    <property type="molecule type" value="mRNA"/>
</dbReference>
<dbReference type="EMBL" id="AY075327">
    <property type="protein sequence ID" value="AAL68194.1"/>
    <property type="status" value="ALT_INIT"/>
    <property type="molecule type" value="mRNA"/>
</dbReference>
<dbReference type="RefSeq" id="NP_001285102.1">
    <property type="nucleotide sequence ID" value="NM_001298173.1"/>
</dbReference>
<dbReference type="RefSeq" id="NP_572668.1">
    <property type="nucleotide sequence ID" value="NM_132440.2"/>
</dbReference>
<dbReference type="SMR" id="Q9VZ49"/>
<dbReference type="BioGRID" id="58443">
    <property type="interactions" value="2"/>
</dbReference>
<dbReference type="FunCoup" id="Q9VZ49">
    <property type="interactions" value="2"/>
</dbReference>
<dbReference type="IntAct" id="Q9VZ49">
    <property type="interactions" value="1"/>
</dbReference>
<dbReference type="STRING" id="7227.FBpp0073243"/>
<dbReference type="GlyGen" id="Q9VZ49">
    <property type="glycosylation" value="9 sites"/>
</dbReference>
<dbReference type="PaxDb" id="7227-FBpp0073243"/>
<dbReference type="DNASU" id="32027"/>
<dbReference type="EnsemblMetazoa" id="FBtr0073387">
    <property type="protein sequence ID" value="FBpp0073243"/>
    <property type="gene ID" value="FBgn0030251"/>
</dbReference>
<dbReference type="EnsemblMetazoa" id="FBtr0343591">
    <property type="protein sequence ID" value="FBpp0310188"/>
    <property type="gene ID" value="FBgn0030251"/>
</dbReference>
<dbReference type="GeneID" id="32027"/>
<dbReference type="KEGG" id="dme:Dmel_CG2145"/>
<dbReference type="UCSC" id="CG2145-RA">
    <property type="organism name" value="d. melanogaster"/>
</dbReference>
<dbReference type="AGR" id="FB:FBgn0030251"/>
<dbReference type="FlyBase" id="FBgn0030251">
    <property type="gene designation" value="Arlr"/>
</dbReference>
<dbReference type="VEuPathDB" id="VectorBase:FBgn0030251"/>
<dbReference type="eggNOG" id="KOG2849">
    <property type="taxonomic scope" value="Eukaryota"/>
</dbReference>
<dbReference type="GeneTree" id="ENSGT00530000063825"/>
<dbReference type="HOGENOM" id="CLU_036748_0_0_1"/>
<dbReference type="InParanoid" id="Q9VZ49"/>
<dbReference type="OMA" id="FNNYEQD"/>
<dbReference type="OrthoDB" id="430326at2759"/>
<dbReference type="PhylomeDB" id="Q9VZ49"/>
<dbReference type="BioGRID-ORCS" id="32027">
    <property type="hits" value="0 hits in 1 CRISPR screen"/>
</dbReference>
<dbReference type="GenomeRNAi" id="32027"/>
<dbReference type="PRO" id="PR:Q9VZ49"/>
<dbReference type="Proteomes" id="UP000000803">
    <property type="component" value="Chromosome X"/>
</dbReference>
<dbReference type="Bgee" id="FBgn0030251">
    <property type="expression patterns" value="Expressed in head capsule and 75 other cell types or tissues"/>
</dbReference>
<dbReference type="ExpressionAtlas" id="Q9VZ49">
    <property type="expression patterns" value="baseline and differential"/>
</dbReference>
<dbReference type="GO" id="GO:0005783">
    <property type="term" value="C:endoplasmic reticulum"/>
    <property type="evidence" value="ECO:0000314"/>
    <property type="project" value="FlyBase"/>
</dbReference>
<dbReference type="GO" id="GO:0005788">
    <property type="term" value="C:endoplasmic reticulum lumen"/>
    <property type="evidence" value="ECO:0007669"/>
    <property type="project" value="UniProtKB-SubCell"/>
</dbReference>
<dbReference type="GO" id="GO:0005576">
    <property type="term" value="C:extracellular region"/>
    <property type="evidence" value="ECO:0007669"/>
    <property type="project" value="UniProtKB-SubCell"/>
</dbReference>
<dbReference type="GO" id="GO:0046872">
    <property type="term" value="F:metal ion binding"/>
    <property type="evidence" value="ECO:0007669"/>
    <property type="project" value="UniProtKB-KW"/>
</dbReference>
<dbReference type="GO" id="GO:0033897">
    <property type="term" value="F:ribonuclease T2 activity"/>
    <property type="evidence" value="ECO:0007669"/>
    <property type="project" value="RHEA"/>
</dbReference>
<dbReference type="GO" id="GO:0003723">
    <property type="term" value="F:RNA binding"/>
    <property type="evidence" value="ECO:0000250"/>
    <property type="project" value="UniProtKB"/>
</dbReference>
<dbReference type="GO" id="GO:0004521">
    <property type="term" value="F:RNA endonuclease activity"/>
    <property type="evidence" value="ECO:0000314"/>
    <property type="project" value="FlyBase"/>
</dbReference>
<dbReference type="GO" id="GO:0061157">
    <property type="term" value="P:mRNA destabilization"/>
    <property type="evidence" value="ECO:0000315"/>
    <property type="project" value="FlyBase"/>
</dbReference>
<dbReference type="GO" id="GO:0050995">
    <property type="term" value="P:negative regulation of lipid catabolic process"/>
    <property type="evidence" value="ECO:0000315"/>
    <property type="project" value="FlyBase"/>
</dbReference>
<dbReference type="GO" id="GO:0016441">
    <property type="term" value="P:post-transcriptional gene silencing"/>
    <property type="evidence" value="ECO:0000315"/>
    <property type="project" value="FlyBase"/>
</dbReference>
<dbReference type="CDD" id="cd21159">
    <property type="entry name" value="XendoU"/>
    <property type="match status" value="1"/>
</dbReference>
<dbReference type="InterPro" id="IPR039787">
    <property type="entry name" value="ENDOU"/>
</dbReference>
<dbReference type="InterPro" id="IPR037227">
    <property type="entry name" value="EndoU-like"/>
</dbReference>
<dbReference type="InterPro" id="IPR018998">
    <property type="entry name" value="EndoU_C"/>
</dbReference>
<dbReference type="PANTHER" id="PTHR12439:SF42">
    <property type="entry name" value="ENDORIBONUCLEASE-RELATED"/>
    <property type="match status" value="1"/>
</dbReference>
<dbReference type="PANTHER" id="PTHR12439">
    <property type="entry name" value="PLACENTAL PROTEIN 11-RELATED"/>
    <property type="match status" value="1"/>
</dbReference>
<dbReference type="Pfam" id="PF09412">
    <property type="entry name" value="XendoU"/>
    <property type="match status" value="1"/>
</dbReference>
<dbReference type="SUPFAM" id="SSF142877">
    <property type="entry name" value="EndoU-like"/>
    <property type="match status" value="1"/>
</dbReference>
<dbReference type="PROSITE" id="PS51959">
    <property type="entry name" value="ENDOU"/>
    <property type="match status" value="1"/>
</dbReference>
<reference key="1">
    <citation type="journal article" date="2000" name="Science">
        <title>The genome sequence of Drosophila melanogaster.</title>
        <authorList>
            <person name="Adams M.D."/>
            <person name="Celniker S.E."/>
            <person name="Holt R.A."/>
            <person name="Evans C.A."/>
            <person name="Gocayne J.D."/>
            <person name="Amanatides P.G."/>
            <person name="Scherer S.E."/>
            <person name="Li P.W."/>
            <person name="Hoskins R.A."/>
            <person name="Galle R.F."/>
            <person name="George R.A."/>
            <person name="Lewis S.E."/>
            <person name="Richards S."/>
            <person name="Ashburner M."/>
            <person name="Henderson S.N."/>
            <person name="Sutton G.G."/>
            <person name="Wortman J.R."/>
            <person name="Yandell M.D."/>
            <person name="Zhang Q."/>
            <person name="Chen L.X."/>
            <person name="Brandon R.C."/>
            <person name="Rogers Y.-H.C."/>
            <person name="Blazej R.G."/>
            <person name="Champe M."/>
            <person name="Pfeiffer B.D."/>
            <person name="Wan K.H."/>
            <person name="Doyle C."/>
            <person name="Baxter E.G."/>
            <person name="Helt G."/>
            <person name="Nelson C.R."/>
            <person name="Miklos G.L.G."/>
            <person name="Abril J.F."/>
            <person name="Agbayani A."/>
            <person name="An H.-J."/>
            <person name="Andrews-Pfannkoch C."/>
            <person name="Baldwin D."/>
            <person name="Ballew R.M."/>
            <person name="Basu A."/>
            <person name="Baxendale J."/>
            <person name="Bayraktaroglu L."/>
            <person name="Beasley E.M."/>
            <person name="Beeson K.Y."/>
            <person name="Benos P.V."/>
            <person name="Berman B.P."/>
            <person name="Bhandari D."/>
            <person name="Bolshakov S."/>
            <person name="Borkova D."/>
            <person name="Botchan M.R."/>
            <person name="Bouck J."/>
            <person name="Brokstein P."/>
            <person name="Brottier P."/>
            <person name="Burtis K.C."/>
            <person name="Busam D.A."/>
            <person name="Butler H."/>
            <person name="Cadieu E."/>
            <person name="Center A."/>
            <person name="Chandra I."/>
            <person name="Cherry J.M."/>
            <person name="Cawley S."/>
            <person name="Dahlke C."/>
            <person name="Davenport L.B."/>
            <person name="Davies P."/>
            <person name="de Pablos B."/>
            <person name="Delcher A."/>
            <person name="Deng Z."/>
            <person name="Mays A.D."/>
            <person name="Dew I."/>
            <person name="Dietz S.M."/>
            <person name="Dodson K."/>
            <person name="Doup L.E."/>
            <person name="Downes M."/>
            <person name="Dugan-Rocha S."/>
            <person name="Dunkov B.C."/>
            <person name="Dunn P."/>
            <person name="Durbin K.J."/>
            <person name="Evangelista C.C."/>
            <person name="Ferraz C."/>
            <person name="Ferriera S."/>
            <person name="Fleischmann W."/>
            <person name="Fosler C."/>
            <person name="Gabrielian A.E."/>
            <person name="Garg N.S."/>
            <person name="Gelbart W.M."/>
            <person name="Glasser K."/>
            <person name="Glodek A."/>
            <person name="Gong F."/>
            <person name="Gorrell J.H."/>
            <person name="Gu Z."/>
            <person name="Guan P."/>
            <person name="Harris M."/>
            <person name="Harris N.L."/>
            <person name="Harvey D.A."/>
            <person name="Heiman T.J."/>
            <person name="Hernandez J.R."/>
            <person name="Houck J."/>
            <person name="Hostin D."/>
            <person name="Houston K.A."/>
            <person name="Howland T.J."/>
            <person name="Wei M.-H."/>
            <person name="Ibegwam C."/>
            <person name="Jalali M."/>
            <person name="Kalush F."/>
            <person name="Karpen G.H."/>
            <person name="Ke Z."/>
            <person name="Kennison J.A."/>
            <person name="Ketchum K.A."/>
            <person name="Kimmel B.E."/>
            <person name="Kodira C.D."/>
            <person name="Kraft C.L."/>
            <person name="Kravitz S."/>
            <person name="Kulp D."/>
            <person name="Lai Z."/>
            <person name="Lasko P."/>
            <person name="Lei Y."/>
            <person name="Levitsky A.A."/>
            <person name="Li J.H."/>
            <person name="Li Z."/>
            <person name="Liang Y."/>
            <person name="Lin X."/>
            <person name="Liu X."/>
            <person name="Mattei B."/>
            <person name="McIntosh T.C."/>
            <person name="McLeod M.P."/>
            <person name="McPherson D."/>
            <person name="Merkulov G."/>
            <person name="Milshina N.V."/>
            <person name="Mobarry C."/>
            <person name="Morris J."/>
            <person name="Moshrefi A."/>
            <person name="Mount S.M."/>
            <person name="Moy M."/>
            <person name="Murphy B."/>
            <person name="Murphy L."/>
            <person name="Muzny D.M."/>
            <person name="Nelson D.L."/>
            <person name="Nelson D.R."/>
            <person name="Nelson K.A."/>
            <person name="Nixon K."/>
            <person name="Nusskern D.R."/>
            <person name="Pacleb J.M."/>
            <person name="Palazzolo M."/>
            <person name="Pittman G.S."/>
            <person name="Pan S."/>
            <person name="Pollard J."/>
            <person name="Puri V."/>
            <person name="Reese M.G."/>
            <person name="Reinert K."/>
            <person name="Remington K."/>
            <person name="Saunders R.D.C."/>
            <person name="Scheeler F."/>
            <person name="Shen H."/>
            <person name="Shue B.C."/>
            <person name="Siden-Kiamos I."/>
            <person name="Simpson M."/>
            <person name="Skupski M.P."/>
            <person name="Smith T.J."/>
            <person name="Spier E."/>
            <person name="Spradling A.C."/>
            <person name="Stapleton M."/>
            <person name="Strong R."/>
            <person name="Sun E."/>
            <person name="Svirskas R."/>
            <person name="Tector C."/>
            <person name="Turner R."/>
            <person name="Venter E."/>
            <person name="Wang A.H."/>
            <person name="Wang X."/>
            <person name="Wang Z.-Y."/>
            <person name="Wassarman D.A."/>
            <person name="Weinstock G.M."/>
            <person name="Weissenbach J."/>
            <person name="Williams S.M."/>
            <person name="Woodage T."/>
            <person name="Worley K.C."/>
            <person name="Wu D."/>
            <person name="Yang S."/>
            <person name="Yao Q.A."/>
            <person name="Ye J."/>
            <person name="Yeh R.-F."/>
            <person name="Zaveri J.S."/>
            <person name="Zhan M."/>
            <person name="Zhang G."/>
            <person name="Zhao Q."/>
            <person name="Zheng L."/>
            <person name="Zheng X.H."/>
            <person name="Zhong F.N."/>
            <person name="Zhong W."/>
            <person name="Zhou X."/>
            <person name="Zhu S.C."/>
            <person name="Zhu X."/>
            <person name="Smith H.O."/>
            <person name="Gibbs R.A."/>
            <person name="Myers E.W."/>
            <person name="Rubin G.M."/>
            <person name="Venter J.C."/>
        </authorList>
    </citation>
    <scope>NUCLEOTIDE SEQUENCE [LARGE SCALE GENOMIC DNA]</scope>
    <source>
        <strain>Berkeley</strain>
    </source>
</reference>
<reference key="2">
    <citation type="journal article" date="2002" name="Genome Biol.">
        <title>Annotation of the Drosophila melanogaster euchromatic genome: a systematic review.</title>
        <authorList>
            <person name="Misra S."/>
            <person name="Crosby M.A."/>
            <person name="Mungall C.J."/>
            <person name="Matthews B.B."/>
            <person name="Campbell K.S."/>
            <person name="Hradecky P."/>
            <person name="Huang Y."/>
            <person name="Kaminker J.S."/>
            <person name="Millburn G.H."/>
            <person name="Prochnik S.E."/>
            <person name="Smith C.D."/>
            <person name="Tupy J.L."/>
            <person name="Whitfield E.J."/>
            <person name="Bayraktaroglu L."/>
            <person name="Berman B.P."/>
            <person name="Bettencourt B.R."/>
            <person name="Celniker S.E."/>
            <person name="de Grey A.D.N.J."/>
            <person name="Drysdale R.A."/>
            <person name="Harris N.L."/>
            <person name="Richter J."/>
            <person name="Russo S."/>
            <person name="Schroeder A.J."/>
            <person name="Shu S.Q."/>
            <person name="Stapleton M."/>
            <person name="Yamada C."/>
            <person name="Ashburner M."/>
            <person name="Gelbart W.M."/>
            <person name="Rubin G.M."/>
            <person name="Lewis S.E."/>
        </authorList>
    </citation>
    <scope>GENOME REANNOTATION</scope>
    <source>
        <strain>Berkeley</strain>
    </source>
</reference>
<reference key="3">
    <citation type="submission" date="2007-12" db="EMBL/GenBank/DDBJ databases">
        <authorList>
            <person name="Stapleton M."/>
            <person name="Carlson J."/>
            <person name="Frise E."/>
            <person name="Kapadia B."/>
            <person name="Park S."/>
            <person name="Wan K."/>
            <person name="Yu C."/>
            <person name="Celniker S."/>
        </authorList>
    </citation>
    <scope>NUCLEOTIDE SEQUENCE [LARGE SCALE MRNA]</scope>
    <source>
        <strain>Berkeley</strain>
        <tissue>Head</tissue>
    </source>
</reference>
<reference key="4">
    <citation type="journal article" date="2002" name="Genome Biol.">
        <title>A Drosophila full-length cDNA resource.</title>
        <authorList>
            <person name="Stapleton M."/>
            <person name="Carlson J.W."/>
            <person name="Brokstein P."/>
            <person name="Yu C."/>
            <person name="Champe M."/>
            <person name="George R.A."/>
            <person name="Guarin H."/>
            <person name="Kronmiller B."/>
            <person name="Pacleb J.M."/>
            <person name="Park S."/>
            <person name="Wan K.H."/>
            <person name="Rubin G.M."/>
            <person name="Celniker S.E."/>
        </authorList>
    </citation>
    <scope>NUCLEOTIDE SEQUENCE [LARGE SCALE MRNA] OF 317-592</scope>
    <source>
        <strain>Berkeley</strain>
        <tissue>Head</tissue>
    </source>
</reference>
<reference key="5">
    <citation type="journal article" date="2017" name="Sci. Rep.">
        <title>Drosophila CG3303 is an essential endoribonuclease linked to TDP-43-mediated neurodegeneration.</title>
        <authorList>
            <person name="Laneve P."/>
            <person name="Piacentini L."/>
            <person name="Casale A.M."/>
            <person name="Capauto D."/>
            <person name="Gioia U."/>
            <person name="Cappucci U."/>
            <person name="Di Carlo V."/>
            <person name="Bozzoni I."/>
            <person name="Di Micco P."/>
            <person name="Morea V."/>
            <person name="Di Franco C.A."/>
            <person name="Caffarelli E."/>
        </authorList>
    </citation>
    <scope>FUNCTION</scope>
    <scope>CATALYTIC ACTIVITY</scope>
    <scope>COFACTOR MN(2+)</scope>
    <scope>TISSUE SPECIFICITY</scope>
    <scope>DEVELOPMENTAL STAGE</scope>
    <scope>DISRUPTION PHENOTYPE</scope>
</reference>
<reference key="6">
    <citation type="journal article" date="2023" name="Nat. Commun.">
        <title>The endoribonuclease Arlr is required to maintain lipid homeostasis by downregulating lipolytic genes during aging.</title>
        <authorList>
            <person name="Sun X."/>
            <person name="Shen J."/>
            <person name="Perrimon N."/>
            <person name="Kong X."/>
            <person name="Wang D."/>
        </authorList>
    </citation>
    <scope>FUNCTION</scope>
    <scope>SUBCELLULAR LOCATION</scope>
    <scope>TISSUE SPECIFICITY</scope>
    <scope>DEVELOPMENTAL STAGE</scope>
    <scope>DOMAIN ENDOU AND SIGNAL PEPTIDE</scope>
    <scope>DISRUPTION PHENOTYPE</scope>
</reference>
<evidence type="ECO:0000255" key="1"/>
<evidence type="ECO:0000255" key="2">
    <source>
        <dbReference type="PROSITE-ProRule" id="PRU01304"/>
    </source>
</evidence>
<evidence type="ECO:0000256" key="3">
    <source>
        <dbReference type="SAM" id="MobiDB-lite"/>
    </source>
</evidence>
<evidence type="ECO:0000269" key="4">
    <source>
    </source>
</evidence>
<evidence type="ECO:0000269" key="5">
    <source>
    </source>
</evidence>
<evidence type="ECO:0000305" key="6"/>
<evidence type="ECO:0000312" key="7">
    <source>
        <dbReference type="FlyBase" id="FBgn0030251"/>
    </source>
</evidence>
<evidence type="ECO:0000312" key="8">
    <source>
        <dbReference type="Proteomes" id="UP000000803"/>
    </source>
</evidence>
<keyword id="KW-0255">Endonuclease</keyword>
<keyword id="KW-0256">Endoplasmic reticulum</keyword>
<keyword id="KW-0378">Hydrolase</keyword>
<keyword id="KW-0456">Lyase</keyword>
<keyword id="KW-0464">Manganese</keyword>
<keyword id="KW-0479">Metal-binding</keyword>
<keyword id="KW-0540">Nuclease</keyword>
<keyword id="KW-1185">Reference proteome</keyword>
<keyword id="KW-0694">RNA-binding</keyword>
<keyword id="KW-0964">Secreted</keyword>
<keyword id="KW-0732">Signal</keyword>
<protein>
    <recommendedName>
        <fullName evidence="6">Endoribonuclease Arlr</fullName>
        <ecNumber evidence="2">3.1.-.-</ecNumber>
        <ecNumber evidence="4">4.6.1.-</ecNumber>
    </recommendedName>
    <alternativeName>
        <fullName>Poly(U)-specific endoribonuclease homolog</fullName>
    </alternativeName>
    <alternativeName>
        <fullName evidence="7">Protein Age-related lipid regulator</fullName>
    </alternativeName>
</protein>
<gene>
    <name evidence="7" type="primary">Arlr</name>
    <name evidence="7" type="ORF">CG2145</name>
</gene>
<accession>Q9VZ49</accession>
<accession>A9UNF0</accession>
<accession>Q8SY54</accession>
<accession>X2JJD6</accession>
<comment type="function">
    <text evidence="4 5">Endoribonuclease that cleaves single-stranded RNAs; unlike its paralog EndoU it does not appear to preferentially cleave at uridylates and releases linear products instead of products that have 2'-3'-cyclic phosphate termini (PubMed:28139767). Preferentially cleaves single stranded RNA at sites with AU, UC and poly-U sites cleaved less efficiently (PubMed:28139767). Targets mRNAs encoding proteins involved in lipid metabolism, particularly those involved in lipolysis, to regulate their expression (PubMed:37803019).</text>
</comment>
<comment type="catalytic activity">
    <reaction evidence="4">
        <text>a ribonucleotidyl-ribonucleotide-RNA + H2O = a 3'-end 3'-phospho-ribonucleotide-RNA + a 5'-end dephospho-ribonucleoside-RNA + H(+)</text>
        <dbReference type="Rhea" id="RHEA:68052"/>
        <dbReference type="Rhea" id="RHEA-COMP:10463"/>
        <dbReference type="Rhea" id="RHEA-COMP:13936"/>
        <dbReference type="Rhea" id="RHEA-COMP:17355"/>
        <dbReference type="ChEBI" id="CHEBI:15377"/>
        <dbReference type="ChEBI" id="CHEBI:15378"/>
        <dbReference type="ChEBI" id="CHEBI:83062"/>
        <dbReference type="ChEBI" id="CHEBI:138284"/>
        <dbReference type="ChEBI" id="CHEBI:173118"/>
    </reaction>
    <physiologicalReaction direction="left-to-right" evidence="4">
        <dbReference type="Rhea" id="RHEA:68053"/>
    </physiologicalReaction>
</comment>
<comment type="cofactor">
    <cofactor evidence="4">
        <name>Mn(2+)</name>
        <dbReference type="ChEBI" id="CHEBI:29035"/>
    </cofactor>
</comment>
<comment type="subunit">
    <text evidence="2">Monomer.</text>
</comment>
<comment type="subcellular location">
    <subcellularLocation>
        <location evidence="5">Endoplasmic reticulum lumen</location>
    </subcellularLocation>
    <subcellularLocation>
        <location evidence="6">Secreted</location>
    </subcellularLocation>
</comment>
<comment type="tissue specificity">
    <text evidence="4 5">Predominantly expressed in head (PubMed:28139767). Expressed in fat body cells (PubMed:37803019).</text>
</comment>
<comment type="developmental stage">
    <text evidence="4 5">Expressed at all stages of development with significantly higher levels of expression in adults.</text>
</comment>
<comment type="domain">
    <text evidence="5">The signal peptide is not required for the protein's role in lipid droplet maturation.</text>
</comment>
<comment type="domain">
    <text evidence="5">The EndoU domain is essential for the protein's role in lipid droplet maturation.</text>
</comment>
<comment type="disruption phenotype">
    <text evidence="4 5">Viable without any behavioral or developmental defects but adults have reduced lifespan (PubMed:28139767, PubMed:37803019). From 3 weeks of age onwards male and female adults have reduced triacylglycerol levels and lipid droplets are reduced in size (PubMed:37803019). Adult flies show faster consumption of lipid stores upon starvation (PubMed:37803019). RNAi-mediated knockdown in fat body tissue results in adults with smaller lipid droplets in fat body cells (PubMed:37803019).</text>
</comment>
<comment type="similarity">
    <text evidence="2">Belongs to the ENDOU family.</text>
</comment>
<comment type="sequence caution" evidence="6">
    <conflict type="erroneous initiation">
        <sequence resource="EMBL-CDS" id="AAL68194"/>
    </conflict>
    <text>Truncated N-terminus.</text>
</comment>
<comment type="sequence caution" evidence="6">
    <conflict type="erroneous initiation">
        <sequence resource="EMBL-CDS" id="ABY21727"/>
    </conflict>
    <text>Extended N-terminus.</text>
</comment>
<sequence length="592" mass="63596">MRCLALSAVFLCLTLAGHFHLSDAYKNEVQITPDPLDAVETTTKKSSWFGGFKKFFGSDGTTTTTSTIAPPVVTSPKSVVVTPTAANKPPPLVISHAPLMPLGPRPDTPGSSPFGASQNPQTPPQWPSSTRATPSHPSQPSQPSQQPPLPGFASYRPQKPQPNSYDLSYGGGPQPAPAGTGRPGFGLGISSTTSTTTTAKPITSTTGKTPQQKEDFPALPGPRRPSQKEDFPALPAPKTPPGSPTPTPGSPSAWQSPLPTPQHPVHPPTKATSAATPTPTPTPSFSSSVTPTPAHGSSVGPHKDGGGGGGGGTTTVRPGFQSSGNSVATDDEIRQLTELLYTKESNSQIGNIQVNLQGRTRSIDSADEAPNPLLTVDSKALESPTIVKMRLLFNNYEHDTHVNEHVTPNERKEENDFLDAVMATPVMRQAMLFLQQKGVVSPDPKTHRDLVKELWFTQYSRGQGKIGSSGFEHVFVYEVKDGTIIGFHNWVYIGDEEKDGRFDYKGYMKEQDIGTKGKIVKIRFSHQGLNKPVNTVFVGTSPELELALYTVCFQLRPDRTCPVSLGNSKFGIVTYSWRYRGKNLIGSAYPEI</sequence>